<keyword id="KW-0067">ATP-binding</keyword>
<keyword id="KW-0997">Cell inner membrane</keyword>
<keyword id="KW-1003">Cell membrane</keyword>
<keyword id="KW-0472">Membrane</keyword>
<keyword id="KW-0547">Nucleotide-binding</keyword>
<keyword id="KW-1185">Reference proteome</keyword>
<keyword id="KW-1278">Translocase</keyword>
<keyword id="KW-0813">Transport</keyword>
<proteinExistence type="inferred from homology"/>
<dbReference type="EC" id="7.6.2.-" evidence="1"/>
<dbReference type="EMBL" id="CP000034">
    <property type="protein sequence ID" value="ABB63522.1"/>
    <property type="molecule type" value="Genomic_DNA"/>
</dbReference>
<dbReference type="RefSeq" id="WP_001626196.1">
    <property type="nucleotide sequence ID" value="NC_007606.1"/>
</dbReference>
<dbReference type="RefSeq" id="YP_405013.1">
    <property type="nucleotide sequence ID" value="NC_007606.1"/>
</dbReference>
<dbReference type="SMR" id="Q32AY3"/>
<dbReference type="STRING" id="300267.SDY_3547"/>
<dbReference type="TCDB" id="3.A.1.14.18">
    <property type="family name" value="the atp-binding cassette (abc) superfamily"/>
</dbReference>
<dbReference type="EnsemblBacteria" id="ABB63522">
    <property type="protein sequence ID" value="ABB63522"/>
    <property type="gene ID" value="SDY_3547"/>
</dbReference>
<dbReference type="KEGG" id="sdy:SDY_3547"/>
<dbReference type="PATRIC" id="fig|300267.13.peg.4209"/>
<dbReference type="HOGENOM" id="CLU_000604_1_11_6"/>
<dbReference type="Proteomes" id="UP000002716">
    <property type="component" value="Chromosome"/>
</dbReference>
<dbReference type="GO" id="GO:0005886">
    <property type="term" value="C:plasma membrane"/>
    <property type="evidence" value="ECO:0007669"/>
    <property type="project" value="UniProtKB-SubCell"/>
</dbReference>
<dbReference type="GO" id="GO:0005524">
    <property type="term" value="F:ATP binding"/>
    <property type="evidence" value="ECO:0007669"/>
    <property type="project" value="UniProtKB-KW"/>
</dbReference>
<dbReference type="GO" id="GO:0016887">
    <property type="term" value="F:ATP hydrolysis activity"/>
    <property type="evidence" value="ECO:0007669"/>
    <property type="project" value="InterPro"/>
</dbReference>
<dbReference type="CDD" id="cd03214">
    <property type="entry name" value="ABC_Iron-Siderophores_B12_Hemin"/>
    <property type="match status" value="1"/>
</dbReference>
<dbReference type="FunFam" id="3.40.50.300:FF:000134">
    <property type="entry name" value="Iron-enterobactin ABC transporter ATP-binding protein"/>
    <property type="match status" value="1"/>
</dbReference>
<dbReference type="Gene3D" id="3.40.50.300">
    <property type="entry name" value="P-loop containing nucleotide triphosphate hydrolases"/>
    <property type="match status" value="1"/>
</dbReference>
<dbReference type="InterPro" id="IPR003593">
    <property type="entry name" value="AAA+_ATPase"/>
</dbReference>
<dbReference type="InterPro" id="IPR003439">
    <property type="entry name" value="ABC_transporter-like_ATP-bd"/>
</dbReference>
<dbReference type="InterPro" id="IPR017871">
    <property type="entry name" value="ABC_transporter-like_CS"/>
</dbReference>
<dbReference type="InterPro" id="IPR027417">
    <property type="entry name" value="P-loop_NTPase"/>
</dbReference>
<dbReference type="NCBIfam" id="NF010068">
    <property type="entry name" value="PRK13548.1"/>
    <property type="match status" value="1"/>
</dbReference>
<dbReference type="PANTHER" id="PTHR42794">
    <property type="entry name" value="HEMIN IMPORT ATP-BINDING PROTEIN HMUV"/>
    <property type="match status" value="1"/>
</dbReference>
<dbReference type="PANTHER" id="PTHR42794:SF1">
    <property type="entry name" value="HEMIN IMPORT ATP-BINDING PROTEIN HMUV"/>
    <property type="match status" value="1"/>
</dbReference>
<dbReference type="Pfam" id="PF00005">
    <property type="entry name" value="ABC_tran"/>
    <property type="match status" value="1"/>
</dbReference>
<dbReference type="SMART" id="SM00382">
    <property type="entry name" value="AAA"/>
    <property type="match status" value="1"/>
</dbReference>
<dbReference type="SUPFAM" id="SSF52540">
    <property type="entry name" value="P-loop containing nucleoside triphosphate hydrolases"/>
    <property type="match status" value="1"/>
</dbReference>
<dbReference type="PROSITE" id="PS00211">
    <property type="entry name" value="ABC_TRANSPORTER_1"/>
    <property type="match status" value="1"/>
</dbReference>
<dbReference type="PROSITE" id="PS50893">
    <property type="entry name" value="ABC_TRANSPORTER_2"/>
    <property type="match status" value="1"/>
</dbReference>
<dbReference type="PROSITE" id="PS51261">
    <property type="entry name" value="HMUV"/>
    <property type="match status" value="1"/>
</dbReference>
<protein>
    <recommendedName>
        <fullName evidence="1">Hemin import ATP-binding protein HmuV</fullName>
        <ecNumber evidence="1">7.6.2.-</ecNumber>
    </recommendedName>
</protein>
<comment type="function">
    <text evidence="1">Part of the ABC transporter complex HmuTUV involved in hemin import. Responsible for energy coupling to the transport system.</text>
</comment>
<comment type="subunit">
    <text evidence="1">The complex is composed of two ATP-binding proteins (HmuV), two transmembrane proteins (HmuU) and a solute-binding protein (HmuT).</text>
</comment>
<comment type="subcellular location">
    <subcellularLocation>
        <location evidence="1">Cell inner membrane</location>
        <topology evidence="1">Peripheral membrane protein</topology>
    </subcellularLocation>
</comment>
<comment type="similarity">
    <text evidence="1">Belongs to the ABC transporter superfamily. Heme (hemin) importer (TC 3.A.1.14.5) family.</text>
</comment>
<feature type="chain" id="PRO_0000269627" description="Hemin import ATP-binding protein HmuV">
    <location>
        <begin position="1"/>
        <end position="256"/>
    </location>
</feature>
<feature type="domain" description="ABC transporter" evidence="1">
    <location>
        <begin position="2"/>
        <end position="238"/>
    </location>
</feature>
<feature type="binding site" evidence="1">
    <location>
        <begin position="34"/>
        <end position="41"/>
    </location>
    <ligand>
        <name>ATP</name>
        <dbReference type="ChEBI" id="CHEBI:30616"/>
    </ligand>
</feature>
<accession>Q32AY3</accession>
<evidence type="ECO:0000255" key="1">
    <source>
        <dbReference type="HAMAP-Rule" id="MF_01718"/>
    </source>
</evidence>
<gene>
    <name evidence="1" type="primary">hmuV</name>
    <name type="synonym">shuV</name>
    <name type="ordered locus">SDY_3547</name>
</gene>
<name>HMUV_SHIDS</name>
<reference key="1">
    <citation type="journal article" date="2005" name="Nucleic Acids Res.">
        <title>Genome dynamics and diversity of Shigella species, the etiologic agents of bacillary dysentery.</title>
        <authorList>
            <person name="Yang F."/>
            <person name="Yang J."/>
            <person name="Zhang X."/>
            <person name="Chen L."/>
            <person name="Jiang Y."/>
            <person name="Yan Y."/>
            <person name="Tang X."/>
            <person name="Wang J."/>
            <person name="Xiong Z."/>
            <person name="Dong J."/>
            <person name="Xue Y."/>
            <person name="Zhu Y."/>
            <person name="Xu X."/>
            <person name="Sun L."/>
            <person name="Chen S."/>
            <person name="Nie H."/>
            <person name="Peng J."/>
            <person name="Xu J."/>
            <person name="Wang Y."/>
            <person name="Yuan Z."/>
            <person name="Wen Y."/>
            <person name="Yao Z."/>
            <person name="Shen Y."/>
            <person name="Qiang B."/>
            <person name="Hou Y."/>
            <person name="Yu J."/>
            <person name="Jin Q."/>
        </authorList>
    </citation>
    <scope>NUCLEOTIDE SEQUENCE [LARGE SCALE GENOMIC DNA]</scope>
    <source>
        <strain>Sd197</strain>
    </source>
</reference>
<organism>
    <name type="scientific">Shigella dysenteriae serotype 1 (strain Sd197)</name>
    <dbReference type="NCBI Taxonomy" id="300267"/>
    <lineage>
        <taxon>Bacteria</taxon>
        <taxon>Pseudomonadati</taxon>
        <taxon>Pseudomonadota</taxon>
        <taxon>Gammaproteobacteria</taxon>
        <taxon>Enterobacterales</taxon>
        <taxon>Enterobacteriaceae</taxon>
        <taxon>Shigella</taxon>
    </lineage>
</organism>
<sequence>MISAQNLVYSLQGRRLTDNVSLTFPGGEIVAILGPNGAGKSTLLRQLTGYLQPDSGECRLFNKPLNEWSITELAKHRAVMRQNSHMAFPFSVQEVIQMGRHPHRTGNQDNETAQIMALCDCQALANRDYRQLSGGEQQRVQLARLLVQLWEPTPSPKWLFLDEPTSALDIHHQQHLFRLLRQLVHERQFNVCCVLHDLNLAARYADRIVLMQKGKVIANGKPQDVLTQQALTMLYGADITVLEDPANHSPLIVLDH</sequence>